<protein>
    <recommendedName>
        <fullName>Movement protein</fullName>
    </recommendedName>
    <alternativeName>
        <fullName>p22</fullName>
    </alternativeName>
</protein>
<keyword id="KW-1043">Host membrane</keyword>
<keyword id="KW-0945">Host-virus interaction</keyword>
<keyword id="KW-0472">Membrane</keyword>
<keyword id="KW-0597">Phosphoprotein</keyword>
<keyword id="KW-0694">RNA-binding</keyword>
<keyword id="KW-0813">Transport</keyword>
<keyword id="KW-0916">Viral movement protein</keyword>
<accession>P50630</accession>
<reference key="1">
    <citation type="journal article" date="1996" name="Phytopathology">
        <title>Different tomato bushy stunt virus strains cause disease outbreaks on solanaceous crops in Spain.</title>
        <authorList>
            <person name="Luis-Areteaga M."/>
            <person name="Rodriguez-Cerezo E."/>
            <person name="Fraile A."/>
            <person name="Saez E."/>
            <person name="Garcia-Arenal F."/>
        </authorList>
        <dbReference type="AGRICOLA" id="IND20581771"/>
    </citation>
    <scope>NUCLEOTIDE SEQUENCE [GENOMIC RNA]</scope>
</reference>
<organismHost>
    <name type="scientific">Capsicum annuum</name>
    <name type="common">Capsicum pepper</name>
    <dbReference type="NCBI Taxonomy" id="4072"/>
</organismHost>
<organismHost>
    <name type="scientific">Malus</name>
    <dbReference type="NCBI Taxonomy" id="3749"/>
</organismHost>
<organismHost>
    <name type="scientific">Pyrus</name>
    <name type="common">pears</name>
    <dbReference type="NCBI Taxonomy" id="3766"/>
</organismHost>
<organismHost>
    <name type="scientific">Solanum lycopersicum</name>
    <name type="common">Tomato</name>
    <name type="synonym">Lycopersicon esculentum</name>
    <dbReference type="NCBI Taxonomy" id="4081"/>
</organismHost>
<organismHost>
    <name type="scientific">Solanum melongena</name>
    <name type="common">eggplant</name>
    <dbReference type="NCBI Taxonomy" id="4111"/>
</organismHost>
<organismHost>
    <name type="scientific">Tolmiea menziesii</name>
    <dbReference type="NCBI Taxonomy" id="29777"/>
</organismHost>
<organismHost>
    <name type="scientific">Tulipa</name>
    <dbReference type="NCBI Taxonomy" id="13305"/>
</organismHost>
<feature type="chain" id="PRO_0000222889" description="Movement protein">
    <location>
        <begin position="1"/>
        <end position="189"/>
    </location>
</feature>
<gene>
    <name type="ORF">ORF3</name>
</gene>
<dbReference type="EMBL" id="Z68896">
    <property type="protein sequence ID" value="CAA93125.1"/>
    <property type="molecule type" value="Genomic_RNA"/>
</dbReference>
<dbReference type="GO" id="GO:0033644">
    <property type="term" value="C:host cell membrane"/>
    <property type="evidence" value="ECO:0007669"/>
    <property type="project" value="UniProtKB-SubCell"/>
</dbReference>
<dbReference type="GO" id="GO:0016020">
    <property type="term" value="C:membrane"/>
    <property type="evidence" value="ECO:0007669"/>
    <property type="project" value="UniProtKB-KW"/>
</dbReference>
<dbReference type="GO" id="GO:0019028">
    <property type="term" value="C:viral capsid"/>
    <property type="evidence" value="ECO:0007669"/>
    <property type="project" value="InterPro"/>
</dbReference>
<dbReference type="GO" id="GO:0003723">
    <property type="term" value="F:RNA binding"/>
    <property type="evidence" value="ECO:0007669"/>
    <property type="project" value="UniProtKB-KW"/>
</dbReference>
<dbReference type="GO" id="GO:0046740">
    <property type="term" value="P:transport of virus in host, cell to cell"/>
    <property type="evidence" value="ECO:0007669"/>
    <property type="project" value="UniProtKB-KW"/>
</dbReference>
<dbReference type="InterPro" id="IPR005332">
    <property type="entry name" value="TBSV_p22"/>
</dbReference>
<dbReference type="Pfam" id="PF03558">
    <property type="entry name" value="TBSV_P22"/>
    <property type="match status" value="1"/>
</dbReference>
<evidence type="ECO:0000250" key="1"/>
<evidence type="ECO:0000305" key="2"/>
<proteinExistence type="inferred from homology"/>
<sequence>MDTEYEQVNKPWNELYKETTLGNKLMVNVGMEDQEVPLLPSNFLTKVRVGLSGGYITMRRIRIKIIPLVSRKAGVSGKLYLRDISDTKGRKLHCTESLDLGREIRLTMQHLDFSVSTRSDVPIVFGFEELVSPFLEGRELFSISVKWQFGLSKNCYSLPQSKWKVMYQEDALKVLKPSKKKASKTGSSV</sequence>
<organism>
    <name type="scientific">Tomato bushy stunt virus (strain A23)</name>
    <name type="common">TBSV</name>
    <dbReference type="NCBI Taxonomy" id="70156"/>
    <lineage>
        <taxon>Viruses</taxon>
        <taxon>Riboviria</taxon>
        <taxon>Orthornavirae</taxon>
        <taxon>Kitrinoviricota</taxon>
        <taxon>Tolucaviricetes</taxon>
        <taxon>Tolivirales</taxon>
        <taxon>Tombusviridae</taxon>
        <taxon>Procedovirinae</taxon>
        <taxon>Tombusvirus</taxon>
        <taxon>Tombusvirus lycopersici</taxon>
    </lineage>
</organism>
<comment type="function">
    <text evidence="1">Transports viral genome to neighboring plant cells directly through plasmosdesmata, without any budding. The movement protein allows efficient cell to cell propagation, by bypassing the host cell wall barrier (By similarity).</text>
</comment>
<comment type="subunit">
    <text evidence="1">Interacts with host protein HFI22.</text>
</comment>
<comment type="subcellular location">
    <subcellularLocation>
        <location evidence="1">Host membrane</location>
    </subcellularLocation>
</comment>
<comment type="PTM">
    <text evidence="1">Phosphorylated.</text>
</comment>
<comment type="similarity">
    <text evidence="2">Belongs to the tombusvirus/aureusvirus movement protein p22 family.</text>
</comment>
<name>MVP_TBSVA</name>